<gene>
    <name evidence="1" type="primary">ycjF</name>
    <name type="ordered locus">SSON_1817</name>
</gene>
<keyword id="KW-0997">Cell inner membrane</keyword>
<keyword id="KW-1003">Cell membrane</keyword>
<keyword id="KW-0472">Membrane</keyword>
<keyword id="KW-1185">Reference proteome</keyword>
<keyword id="KW-0812">Transmembrane</keyword>
<keyword id="KW-1133">Transmembrane helix</keyword>
<feature type="chain" id="PRO_1000064853" description="UPF0283 membrane protein YcjF">
    <location>
        <begin position="1"/>
        <end position="353"/>
    </location>
</feature>
<feature type="transmembrane region" description="Helical" evidence="1">
    <location>
        <begin position="70"/>
        <end position="90"/>
    </location>
</feature>
<feature type="transmembrane region" description="Helical" evidence="1">
    <location>
        <begin position="100"/>
        <end position="120"/>
    </location>
</feature>
<feature type="transmembrane region" description="Helical" evidence="1">
    <location>
        <begin position="213"/>
        <end position="233"/>
    </location>
</feature>
<name>YCJF_SHISS</name>
<organism>
    <name type="scientific">Shigella sonnei (strain Ss046)</name>
    <dbReference type="NCBI Taxonomy" id="300269"/>
    <lineage>
        <taxon>Bacteria</taxon>
        <taxon>Pseudomonadati</taxon>
        <taxon>Pseudomonadota</taxon>
        <taxon>Gammaproteobacteria</taxon>
        <taxon>Enterobacterales</taxon>
        <taxon>Enterobacteriaceae</taxon>
        <taxon>Shigella</taxon>
    </lineage>
</organism>
<dbReference type="EMBL" id="CP000038">
    <property type="protein sequence ID" value="AAZ88496.1"/>
    <property type="molecule type" value="Genomic_DNA"/>
</dbReference>
<dbReference type="RefSeq" id="WP_000138707.1">
    <property type="nucleotide sequence ID" value="NC_007384.1"/>
</dbReference>
<dbReference type="KEGG" id="ssn:SSON_1817"/>
<dbReference type="HOGENOM" id="CLU_057693_2_0_6"/>
<dbReference type="Proteomes" id="UP000002529">
    <property type="component" value="Chromosome"/>
</dbReference>
<dbReference type="GO" id="GO:0005886">
    <property type="term" value="C:plasma membrane"/>
    <property type="evidence" value="ECO:0007669"/>
    <property type="project" value="UniProtKB-SubCell"/>
</dbReference>
<dbReference type="HAMAP" id="MF_01085">
    <property type="entry name" value="UPF0283"/>
    <property type="match status" value="1"/>
</dbReference>
<dbReference type="InterPro" id="IPR021147">
    <property type="entry name" value="DUF697"/>
</dbReference>
<dbReference type="InterPro" id="IPR006507">
    <property type="entry name" value="UPF0283"/>
</dbReference>
<dbReference type="NCBIfam" id="TIGR01620">
    <property type="entry name" value="hyp_HI0043"/>
    <property type="match status" value="1"/>
</dbReference>
<dbReference type="PANTHER" id="PTHR39342">
    <property type="entry name" value="UPF0283 MEMBRANE PROTEIN YCJF"/>
    <property type="match status" value="1"/>
</dbReference>
<dbReference type="PANTHER" id="PTHR39342:SF1">
    <property type="entry name" value="UPF0283 MEMBRANE PROTEIN YCJF"/>
    <property type="match status" value="1"/>
</dbReference>
<dbReference type="Pfam" id="PF05128">
    <property type="entry name" value="DUF697"/>
    <property type="match status" value="1"/>
</dbReference>
<evidence type="ECO:0000255" key="1">
    <source>
        <dbReference type="HAMAP-Rule" id="MF_01085"/>
    </source>
</evidence>
<sequence>MTEPLKPRIDFDGPLEVDQNPKFRAQQTFDENQAQNFAPATLDEAPEEEGQVEAVMDAALRPKRSLWRKMVMGGLALFGASVVGQGVQWTMNAWQTQDWVALGGCAAGALIIGAGVGSVVTEWQCLWCLRQRAHERDEARDLLHSHGTGKGRAFCEKLAQQAGIDQSHPALQRWYASIHETQNDREVVSLYAHLVQPVLDAQARREISRSAAESTLMIAVSPLALVDMAFIAWRNLRLINRIATLYGIELGYYSRLRLFKLVLLNIAFAGASELVREVGMDWMSQDLAARLSTRAAQGIGAGLLTARLGIKAMELCRPLPWIDDDKPRLGDFRRQLIGQVKETLQKGKTPSEK</sequence>
<protein>
    <recommendedName>
        <fullName evidence="1">UPF0283 membrane protein YcjF</fullName>
    </recommendedName>
</protein>
<reference key="1">
    <citation type="journal article" date="2005" name="Nucleic Acids Res.">
        <title>Genome dynamics and diversity of Shigella species, the etiologic agents of bacillary dysentery.</title>
        <authorList>
            <person name="Yang F."/>
            <person name="Yang J."/>
            <person name="Zhang X."/>
            <person name="Chen L."/>
            <person name="Jiang Y."/>
            <person name="Yan Y."/>
            <person name="Tang X."/>
            <person name="Wang J."/>
            <person name="Xiong Z."/>
            <person name="Dong J."/>
            <person name="Xue Y."/>
            <person name="Zhu Y."/>
            <person name="Xu X."/>
            <person name="Sun L."/>
            <person name="Chen S."/>
            <person name="Nie H."/>
            <person name="Peng J."/>
            <person name="Xu J."/>
            <person name="Wang Y."/>
            <person name="Yuan Z."/>
            <person name="Wen Y."/>
            <person name="Yao Z."/>
            <person name="Shen Y."/>
            <person name="Qiang B."/>
            <person name="Hou Y."/>
            <person name="Yu J."/>
            <person name="Jin Q."/>
        </authorList>
    </citation>
    <scope>NUCLEOTIDE SEQUENCE [LARGE SCALE GENOMIC DNA]</scope>
    <source>
        <strain>Ss046</strain>
    </source>
</reference>
<accession>Q3Z166</accession>
<comment type="subcellular location">
    <subcellularLocation>
        <location evidence="1">Cell inner membrane</location>
        <topology evidence="1">Multi-pass membrane protein</topology>
    </subcellularLocation>
</comment>
<comment type="similarity">
    <text evidence="1">Belongs to the UPF0283 family.</text>
</comment>
<proteinExistence type="inferred from homology"/>